<feature type="chain" id="PRO_0000410559" description="Uncharacterized protein 014R">
    <location>
        <begin position="1"/>
        <end position="119"/>
    </location>
</feature>
<feature type="region of interest" description="Disordered" evidence="2">
    <location>
        <begin position="95"/>
        <end position="119"/>
    </location>
</feature>
<feature type="coiled-coil region" evidence="1">
    <location>
        <begin position="6"/>
        <end position="36"/>
    </location>
</feature>
<name>014R_FRG3G</name>
<sequence>METLVQAYLDIQGKIAEFRREIKALRVEEKAITANLFEAMGEAGVESIRISEDRYLVAEEKPKRTRSKQQFYQAAEGEGFTQEDVDRLMSLSRGAVTGSSSNVKIRKSAPARNEEDDDG</sequence>
<protein>
    <recommendedName>
        <fullName>Uncharacterized protein 014R</fullName>
    </recommendedName>
</protein>
<gene>
    <name type="ORF">FV3-014R</name>
</gene>
<keyword id="KW-0175">Coiled coil</keyword>
<keyword id="KW-1185">Reference proteome</keyword>
<accession>Q6GZW1</accession>
<dbReference type="EMBL" id="AY548484">
    <property type="protein sequence ID" value="AAT09673.1"/>
    <property type="molecule type" value="Genomic_DNA"/>
</dbReference>
<dbReference type="RefSeq" id="YP_031592.1">
    <property type="nucleotide sequence ID" value="NC_005946.1"/>
</dbReference>
<dbReference type="SMR" id="Q6GZW1"/>
<dbReference type="KEGG" id="vg:2947786"/>
<dbReference type="Proteomes" id="UP000008770">
    <property type="component" value="Segment"/>
</dbReference>
<organism>
    <name type="scientific">Frog virus 3 (isolate Goorha)</name>
    <name type="common">FV-3</name>
    <dbReference type="NCBI Taxonomy" id="654924"/>
    <lineage>
        <taxon>Viruses</taxon>
        <taxon>Varidnaviria</taxon>
        <taxon>Bamfordvirae</taxon>
        <taxon>Nucleocytoviricota</taxon>
        <taxon>Megaviricetes</taxon>
        <taxon>Pimascovirales</taxon>
        <taxon>Iridoviridae</taxon>
        <taxon>Alphairidovirinae</taxon>
        <taxon>Ranavirus</taxon>
        <taxon>Frog virus 3</taxon>
    </lineage>
</organism>
<proteinExistence type="predicted"/>
<organismHost>
    <name type="scientific">Dryophytes versicolor</name>
    <name type="common">chameleon treefrog</name>
    <dbReference type="NCBI Taxonomy" id="30343"/>
</organismHost>
<organismHost>
    <name type="scientific">Lithobates pipiens</name>
    <name type="common">Northern leopard frog</name>
    <name type="synonym">Rana pipiens</name>
    <dbReference type="NCBI Taxonomy" id="8404"/>
</organismHost>
<organismHost>
    <name type="scientific">Lithobates sylvaticus</name>
    <name type="common">Wood frog</name>
    <name type="synonym">Rana sylvatica</name>
    <dbReference type="NCBI Taxonomy" id="45438"/>
</organismHost>
<organismHost>
    <name type="scientific">Notophthalmus viridescens</name>
    <name type="common">Eastern newt</name>
    <name type="synonym">Triturus viridescens</name>
    <dbReference type="NCBI Taxonomy" id="8316"/>
</organismHost>
<evidence type="ECO:0000255" key="1"/>
<evidence type="ECO:0000256" key="2">
    <source>
        <dbReference type="SAM" id="MobiDB-lite"/>
    </source>
</evidence>
<reference key="1">
    <citation type="journal article" date="2004" name="Virology">
        <title>Comparative genomic analyses of frog virus 3, type species of the genus Ranavirus (family Iridoviridae).</title>
        <authorList>
            <person name="Tan W.G."/>
            <person name="Barkman T.J."/>
            <person name="Gregory Chinchar V."/>
            <person name="Essani K."/>
        </authorList>
    </citation>
    <scope>NUCLEOTIDE SEQUENCE [LARGE SCALE GENOMIC DNA]</scope>
</reference>